<accession>Q6D257</accession>
<evidence type="ECO:0000250" key="1">
    <source>
        <dbReference type="UniProtKB" id="P0AE01"/>
    </source>
</evidence>
<evidence type="ECO:0000305" key="2"/>
<proteinExistence type="inferred from homology"/>
<organism>
    <name type="scientific">Pectobacterium atrosepticum (strain SCRI 1043 / ATCC BAA-672)</name>
    <name type="common">Erwinia carotovora subsp. atroseptica</name>
    <dbReference type="NCBI Taxonomy" id="218491"/>
    <lineage>
        <taxon>Bacteria</taxon>
        <taxon>Pseudomonadati</taxon>
        <taxon>Pseudomonadota</taxon>
        <taxon>Gammaproteobacteria</taxon>
        <taxon>Enterobacterales</taxon>
        <taxon>Pectobacteriaceae</taxon>
        <taxon>Pectobacterium</taxon>
    </lineage>
</organism>
<gene>
    <name type="primary">trmJ</name>
    <name type="ordered locus">ECA3239</name>
</gene>
<keyword id="KW-0963">Cytoplasm</keyword>
<keyword id="KW-0489">Methyltransferase</keyword>
<keyword id="KW-1185">Reference proteome</keyword>
<keyword id="KW-0949">S-adenosyl-L-methionine</keyword>
<keyword id="KW-0808">Transferase</keyword>
<keyword id="KW-0819">tRNA processing</keyword>
<sequence length="241" mass="26690">MLDNIRIVLVETSHTGNMGSVARAMKTMGLSKLYLVNPLVKPDSQAIALAAGASDVIGNATLVDSLDQALEGCNLVVGTSARSRTLPWPMLEPRECGVRSAQEAEHAPVALVFGRERVGLTNDELQKCHYHVAIPANPEYSSLNLAMAVQIIAYEVRIAHLDRLQAGQPEHEESPYPLVDDLERFYQHLEQTLLQTGFIRPAHQGQVMNKLRRLFTRARPEAQELNILRGILSSVQKTHDE</sequence>
<dbReference type="EC" id="2.1.1.200" evidence="1"/>
<dbReference type="EMBL" id="BX950851">
    <property type="protein sequence ID" value="CAG76137.1"/>
    <property type="molecule type" value="Genomic_DNA"/>
</dbReference>
<dbReference type="RefSeq" id="WP_011094758.1">
    <property type="nucleotide sequence ID" value="NC_004547.2"/>
</dbReference>
<dbReference type="SMR" id="Q6D257"/>
<dbReference type="STRING" id="218491.ECA3239"/>
<dbReference type="GeneID" id="57209923"/>
<dbReference type="KEGG" id="eca:ECA3239"/>
<dbReference type="PATRIC" id="fig|218491.5.peg.3281"/>
<dbReference type="eggNOG" id="COG0565">
    <property type="taxonomic scope" value="Bacteria"/>
</dbReference>
<dbReference type="HOGENOM" id="CLU_056931_0_1_6"/>
<dbReference type="OrthoDB" id="9806346at2"/>
<dbReference type="Proteomes" id="UP000007966">
    <property type="component" value="Chromosome"/>
</dbReference>
<dbReference type="GO" id="GO:0005829">
    <property type="term" value="C:cytosol"/>
    <property type="evidence" value="ECO:0007669"/>
    <property type="project" value="TreeGrafter"/>
</dbReference>
<dbReference type="GO" id="GO:0003723">
    <property type="term" value="F:RNA binding"/>
    <property type="evidence" value="ECO:0007669"/>
    <property type="project" value="InterPro"/>
</dbReference>
<dbReference type="GO" id="GO:0160206">
    <property type="term" value="F:tRNA (cytidine(32)/uridine(32)-2'-O)-methyltransferase activity"/>
    <property type="evidence" value="ECO:0007669"/>
    <property type="project" value="UniProtKB-EC"/>
</dbReference>
<dbReference type="GO" id="GO:0002128">
    <property type="term" value="P:tRNA nucleoside ribose methylation"/>
    <property type="evidence" value="ECO:0007669"/>
    <property type="project" value="TreeGrafter"/>
</dbReference>
<dbReference type="CDD" id="cd18093">
    <property type="entry name" value="SpoU-like_TrmJ"/>
    <property type="match status" value="1"/>
</dbReference>
<dbReference type="FunFam" id="1.10.8.590:FF:000001">
    <property type="entry name" value="tRNA:Cm32/Um32 methyltransferase"/>
    <property type="match status" value="1"/>
</dbReference>
<dbReference type="FunFam" id="3.40.1280.10:FF:000006">
    <property type="entry name" value="Uncharacterized tRNA/rRNA methyltransferase HI_0380"/>
    <property type="match status" value="1"/>
</dbReference>
<dbReference type="Gene3D" id="1.10.8.590">
    <property type="match status" value="1"/>
</dbReference>
<dbReference type="Gene3D" id="3.40.1280.10">
    <property type="match status" value="1"/>
</dbReference>
<dbReference type="InterPro" id="IPR029028">
    <property type="entry name" value="Alpha/beta_knot_MTases"/>
</dbReference>
<dbReference type="InterPro" id="IPR004384">
    <property type="entry name" value="RNA_MeTrfase_TrmJ/LasT"/>
</dbReference>
<dbReference type="InterPro" id="IPR001537">
    <property type="entry name" value="SpoU_MeTrfase"/>
</dbReference>
<dbReference type="InterPro" id="IPR029026">
    <property type="entry name" value="tRNA_m1G_MTases_N"/>
</dbReference>
<dbReference type="NCBIfam" id="NF011694">
    <property type="entry name" value="PRK15114.1"/>
    <property type="match status" value="1"/>
</dbReference>
<dbReference type="NCBIfam" id="TIGR00050">
    <property type="entry name" value="rRNA_methyl_1"/>
    <property type="match status" value="1"/>
</dbReference>
<dbReference type="PANTHER" id="PTHR42786:SF2">
    <property type="entry name" value="TRNA (CYTIDINE_URIDINE-2'-O-)-METHYLTRANSFERASE TRMJ"/>
    <property type="match status" value="1"/>
</dbReference>
<dbReference type="PANTHER" id="PTHR42786">
    <property type="entry name" value="TRNA/RRNA METHYLTRANSFERASE"/>
    <property type="match status" value="1"/>
</dbReference>
<dbReference type="Pfam" id="PF00588">
    <property type="entry name" value="SpoU_methylase"/>
    <property type="match status" value="1"/>
</dbReference>
<dbReference type="PIRSF" id="PIRSF004808">
    <property type="entry name" value="LasT"/>
    <property type="match status" value="1"/>
</dbReference>
<dbReference type="SUPFAM" id="SSF75217">
    <property type="entry name" value="alpha/beta knot"/>
    <property type="match status" value="1"/>
</dbReference>
<reference key="1">
    <citation type="journal article" date="2004" name="Proc. Natl. Acad. Sci. U.S.A.">
        <title>Genome sequence of the enterobacterial phytopathogen Erwinia carotovora subsp. atroseptica and characterization of virulence factors.</title>
        <authorList>
            <person name="Bell K.S."/>
            <person name="Sebaihia M."/>
            <person name="Pritchard L."/>
            <person name="Holden M.T.G."/>
            <person name="Hyman L.J."/>
            <person name="Holeva M.C."/>
            <person name="Thomson N.R."/>
            <person name="Bentley S.D."/>
            <person name="Churcher L.J.C."/>
            <person name="Mungall K."/>
            <person name="Atkin R."/>
            <person name="Bason N."/>
            <person name="Brooks K."/>
            <person name="Chillingworth T."/>
            <person name="Clark K."/>
            <person name="Doggett J."/>
            <person name="Fraser A."/>
            <person name="Hance Z."/>
            <person name="Hauser H."/>
            <person name="Jagels K."/>
            <person name="Moule S."/>
            <person name="Norbertczak H."/>
            <person name="Ormond D."/>
            <person name="Price C."/>
            <person name="Quail M.A."/>
            <person name="Sanders M."/>
            <person name="Walker D."/>
            <person name="Whitehead S."/>
            <person name="Salmond G.P.C."/>
            <person name="Birch P.R.J."/>
            <person name="Parkhill J."/>
            <person name="Toth I.K."/>
        </authorList>
    </citation>
    <scope>NUCLEOTIDE SEQUENCE [LARGE SCALE GENOMIC DNA]</scope>
    <source>
        <strain>SCRI 1043 / ATCC BAA-672</strain>
    </source>
</reference>
<name>TRMJ_PECAS</name>
<protein>
    <recommendedName>
        <fullName evidence="1">tRNA (cytidine/uridine-2'-O-)-methyltransferase TrmJ</fullName>
        <ecNumber evidence="1">2.1.1.200</ecNumber>
    </recommendedName>
    <alternativeName>
        <fullName evidence="1">tRNA (cytidine(32)/uridine(32)-2'-O)-methyltransferase</fullName>
    </alternativeName>
    <alternativeName>
        <fullName evidence="1">tRNA Cm32/Um32 methyltransferase</fullName>
    </alternativeName>
</protein>
<comment type="function">
    <text evidence="1">Catalyzes the formation of 2'O-methylated cytidine (Cm32) or 2'O-methylated uridine (Um32) at position 32 in tRNA.</text>
</comment>
<comment type="catalytic activity">
    <reaction evidence="1">
        <text>cytidine(32) in tRNA + S-adenosyl-L-methionine = 2'-O-methylcytidine(32) in tRNA + S-adenosyl-L-homocysteine + H(+)</text>
        <dbReference type="Rhea" id="RHEA:42932"/>
        <dbReference type="Rhea" id="RHEA-COMP:10288"/>
        <dbReference type="Rhea" id="RHEA-COMP:10289"/>
        <dbReference type="ChEBI" id="CHEBI:15378"/>
        <dbReference type="ChEBI" id="CHEBI:57856"/>
        <dbReference type="ChEBI" id="CHEBI:59789"/>
        <dbReference type="ChEBI" id="CHEBI:74495"/>
        <dbReference type="ChEBI" id="CHEBI:82748"/>
        <dbReference type="EC" id="2.1.1.200"/>
    </reaction>
</comment>
<comment type="catalytic activity">
    <reaction evidence="1">
        <text>uridine(32) in tRNA + S-adenosyl-L-methionine = 2'-O-methyluridine(32) in tRNA + S-adenosyl-L-homocysteine + H(+)</text>
        <dbReference type="Rhea" id="RHEA:42936"/>
        <dbReference type="Rhea" id="RHEA-COMP:10107"/>
        <dbReference type="Rhea" id="RHEA-COMP:10290"/>
        <dbReference type="ChEBI" id="CHEBI:15378"/>
        <dbReference type="ChEBI" id="CHEBI:57856"/>
        <dbReference type="ChEBI" id="CHEBI:59789"/>
        <dbReference type="ChEBI" id="CHEBI:65315"/>
        <dbReference type="ChEBI" id="CHEBI:74478"/>
        <dbReference type="EC" id="2.1.1.200"/>
    </reaction>
</comment>
<comment type="subunit">
    <text evidence="1">Homodimer.</text>
</comment>
<comment type="subcellular location">
    <subcellularLocation>
        <location evidence="1">Cytoplasm</location>
    </subcellularLocation>
</comment>
<comment type="similarity">
    <text evidence="2">Belongs to the class IV-like SAM-binding methyltransferase superfamily. RNA methyltransferase TrmH family.</text>
</comment>
<feature type="chain" id="PRO_0000313853" description="tRNA (cytidine/uridine-2'-O-)-methyltransferase TrmJ">
    <location>
        <begin position="1"/>
        <end position="241"/>
    </location>
</feature>
<feature type="binding site" evidence="1">
    <location>
        <begin position="79"/>
        <end position="81"/>
    </location>
    <ligand>
        <name>S-adenosyl-L-methionine</name>
        <dbReference type="ChEBI" id="CHEBI:59789"/>
    </ligand>
</feature>
<feature type="binding site" evidence="1">
    <location>
        <position position="114"/>
    </location>
    <ligand>
        <name>S-adenosyl-L-methionine</name>
        <dbReference type="ChEBI" id="CHEBI:59789"/>
    </ligand>
</feature>
<feature type="binding site" evidence="1">
    <location>
        <position position="134"/>
    </location>
    <ligand>
        <name>S-adenosyl-L-methionine</name>
        <dbReference type="ChEBI" id="CHEBI:59789"/>
    </ligand>
</feature>
<feature type="binding site" evidence="1">
    <location>
        <begin position="141"/>
        <end position="143"/>
    </location>
    <ligand>
        <name>S-adenosyl-L-methionine</name>
        <dbReference type="ChEBI" id="CHEBI:59789"/>
    </ligand>
</feature>